<gene>
    <name evidence="1" type="primary">rplM</name>
    <name type="ordered locus">PSHAa2532</name>
</gene>
<feature type="chain" id="PRO_0000261768" description="Large ribosomal subunit protein uL13">
    <location>
        <begin position="1"/>
        <end position="142"/>
    </location>
</feature>
<comment type="function">
    <text evidence="1">This protein is one of the early assembly proteins of the 50S ribosomal subunit, although it is not seen to bind rRNA by itself. It is important during the early stages of 50S assembly.</text>
</comment>
<comment type="subunit">
    <text evidence="1">Part of the 50S ribosomal subunit.</text>
</comment>
<comment type="similarity">
    <text evidence="1">Belongs to the universal ribosomal protein uL13 family.</text>
</comment>
<evidence type="ECO:0000255" key="1">
    <source>
        <dbReference type="HAMAP-Rule" id="MF_01366"/>
    </source>
</evidence>
<evidence type="ECO:0000305" key="2"/>
<protein>
    <recommendedName>
        <fullName evidence="1">Large ribosomal subunit protein uL13</fullName>
    </recommendedName>
    <alternativeName>
        <fullName evidence="2">50S ribosomal protein L13</fullName>
    </alternativeName>
</protein>
<dbReference type="EMBL" id="CR954246">
    <property type="protein sequence ID" value="CAI87580.1"/>
    <property type="molecule type" value="Genomic_DNA"/>
</dbReference>
<dbReference type="SMR" id="Q3IG26"/>
<dbReference type="STRING" id="326442.PSHAa2532"/>
<dbReference type="KEGG" id="pha:PSHAa2532"/>
<dbReference type="eggNOG" id="COG0102">
    <property type="taxonomic scope" value="Bacteria"/>
</dbReference>
<dbReference type="HOGENOM" id="CLU_082184_2_2_6"/>
<dbReference type="BioCyc" id="PHAL326442:PSHA_RS12470-MONOMER"/>
<dbReference type="Proteomes" id="UP000006843">
    <property type="component" value="Chromosome I"/>
</dbReference>
<dbReference type="GO" id="GO:0022625">
    <property type="term" value="C:cytosolic large ribosomal subunit"/>
    <property type="evidence" value="ECO:0007669"/>
    <property type="project" value="TreeGrafter"/>
</dbReference>
<dbReference type="GO" id="GO:0003729">
    <property type="term" value="F:mRNA binding"/>
    <property type="evidence" value="ECO:0007669"/>
    <property type="project" value="TreeGrafter"/>
</dbReference>
<dbReference type="GO" id="GO:0003735">
    <property type="term" value="F:structural constituent of ribosome"/>
    <property type="evidence" value="ECO:0007669"/>
    <property type="project" value="InterPro"/>
</dbReference>
<dbReference type="GO" id="GO:0017148">
    <property type="term" value="P:negative regulation of translation"/>
    <property type="evidence" value="ECO:0007669"/>
    <property type="project" value="TreeGrafter"/>
</dbReference>
<dbReference type="GO" id="GO:0006412">
    <property type="term" value="P:translation"/>
    <property type="evidence" value="ECO:0007669"/>
    <property type="project" value="UniProtKB-UniRule"/>
</dbReference>
<dbReference type="CDD" id="cd00392">
    <property type="entry name" value="Ribosomal_L13"/>
    <property type="match status" value="1"/>
</dbReference>
<dbReference type="FunFam" id="3.90.1180.10:FF:000001">
    <property type="entry name" value="50S ribosomal protein L13"/>
    <property type="match status" value="1"/>
</dbReference>
<dbReference type="Gene3D" id="3.90.1180.10">
    <property type="entry name" value="Ribosomal protein L13"/>
    <property type="match status" value="1"/>
</dbReference>
<dbReference type="HAMAP" id="MF_01366">
    <property type="entry name" value="Ribosomal_uL13"/>
    <property type="match status" value="1"/>
</dbReference>
<dbReference type="InterPro" id="IPR005822">
    <property type="entry name" value="Ribosomal_uL13"/>
</dbReference>
<dbReference type="InterPro" id="IPR005823">
    <property type="entry name" value="Ribosomal_uL13_bac-type"/>
</dbReference>
<dbReference type="InterPro" id="IPR023563">
    <property type="entry name" value="Ribosomal_uL13_CS"/>
</dbReference>
<dbReference type="InterPro" id="IPR036899">
    <property type="entry name" value="Ribosomal_uL13_sf"/>
</dbReference>
<dbReference type="NCBIfam" id="TIGR01066">
    <property type="entry name" value="rplM_bact"/>
    <property type="match status" value="1"/>
</dbReference>
<dbReference type="PANTHER" id="PTHR11545:SF2">
    <property type="entry name" value="LARGE RIBOSOMAL SUBUNIT PROTEIN UL13M"/>
    <property type="match status" value="1"/>
</dbReference>
<dbReference type="PANTHER" id="PTHR11545">
    <property type="entry name" value="RIBOSOMAL PROTEIN L13"/>
    <property type="match status" value="1"/>
</dbReference>
<dbReference type="Pfam" id="PF00572">
    <property type="entry name" value="Ribosomal_L13"/>
    <property type="match status" value="1"/>
</dbReference>
<dbReference type="PIRSF" id="PIRSF002181">
    <property type="entry name" value="Ribosomal_L13"/>
    <property type="match status" value="1"/>
</dbReference>
<dbReference type="SUPFAM" id="SSF52161">
    <property type="entry name" value="Ribosomal protein L13"/>
    <property type="match status" value="1"/>
</dbReference>
<dbReference type="PROSITE" id="PS00783">
    <property type="entry name" value="RIBOSOMAL_L13"/>
    <property type="match status" value="1"/>
</dbReference>
<keyword id="KW-1185">Reference proteome</keyword>
<keyword id="KW-0687">Ribonucleoprotein</keyword>
<keyword id="KW-0689">Ribosomal protein</keyword>
<accession>Q3IG26</accession>
<reference key="1">
    <citation type="journal article" date="2005" name="Genome Res.">
        <title>Coping with cold: the genome of the versatile marine Antarctica bacterium Pseudoalteromonas haloplanktis TAC125.</title>
        <authorList>
            <person name="Medigue C."/>
            <person name="Krin E."/>
            <person name="Pascal G."/>
            <person name="Barbe V."/>
            <person name="Bernsel A."/>
            <person name="Bertin P.N."/>
            <person name="Cheung F."/>
            <person name="Cruveiller S."/>
            <person name="D'Amico S."/>
            <person name="Duilio A."/>
            <person name="Fang G."/>
            <person name="Feller G."/>
            <person name="Ho C."/>
            <person name="Mangenot S."/>
            <person name="Marino G."/>
            <person name="Nilsson J."/>
            <person name="Parrilli E."/>
            <person name="Rocha E.P.C."/>
            <person name="Rouy Z."/>
            <person name="Sekowska A."/>
            <person name="Tutino M.L."/>
            <person name="Vallenet D."/>
            <person name="von Heijne G."/>
            <person name="Danchin A."/>
        </authorList>
    </citation>
    <scope>NUCLEOTIDE SEQUENCE [LARGE SCALE GENOMIC DNA]</scope>
    <source>
        <strain>TAC 125</strain>
    </source>
</reference>
<organism>
    <name type="scientific">Pseudoalteromonas translucida (strain TAC 125)</name>
    <dbReference type="NCBI Taxonomy" id="326442"/>
    <lineage>
        <taxon>Bacteria</taxon>
        <taxon>Pseudomonadati</taxon>
        <taxon>Pseudomonadota</taxon>
        <taxon>Gammaproteobacteria</taxon>
        <taxon>Alteromonadales</taxon>
        <taxon>Pseudoalteromonadaceae</taxon>
        <taxon>Pseudoalteromonas</taxon>
    </lineage>
</organism>
<proteinExistence type="inferred from homology"/>
<name>RL13_PSET1</name>
<sequence length="142" mass="15944">MKTFVAKPETVKRDWYVVDAEGKTLGRIATEIALRLRGKHKVEYTPHVDTGDYIIVINAEKVTVTGNKFKNKVYYSHSGFPGGLKSTTFDKLQAAKPEMIIEKAVKGMLPRGPLGRAMYRKLKVYTGTEHNHAAQQPQVLDI</sequence>